<gene>
    <name evidence="1" type="primary">pdxH</name>
    <name type="ordered locus">BF1453</name>
</gene>
<comment type="function">
    <text evidence="1">Catalyzes the oxidation of either pyridoxine 5'-phosphate (PNP) or pyridoxamine 5'-phosphate (PMP) into pyridoxal 5'-phosphate (PLP).</text>
</comment>
<comment type="catalytic activity">
    <reaction evidence="1">
        <text>pyridoxamine 5'-phosphate + O2 + H2O = pyridoxal 5'-phosphate + H2O2 + NH4(+)</text>
        <dbReference type="Rhea" id="RHEA:15817"/>
        <dbReference type="ChEBI" id="CHEBI:15377"/>
        <dbReference type="ChEBI" id="CHEBI:15379"/>
        <dbReference type="ChEBI" id="CHEBI:16240"/>
        <dbReference type="ChEBI" id="CHEBI:28938"/>
        <dbReference type="ChEBI" id="CHEBI:58451"/>
        <dbReference type="ChEBI" id="CHEBI:597326"/>
        <dbReference type="EC" id="1.4.3.5"/>
    </reaction>
</comment>
<comment type="catalytic activity">
    <reaction evidence="1">
        <text>pyridoxine 5'-phosphate + O2 = pyridoxal 5'-phosphate + H2O2</text>
        <dbReference type="Rhea" id="RHEA:15149"/>
        <dbReference type="ChEBI" id="CHEBI:15379"/>
        <dbReference type="ChEBI" id="CHEBI:16240"/>
        <dbReference type="ChEBI" id="CHEBI:58589"/>
        <dbReference type="ChEBI" id="CHEBI:597326"/>
        <dbReference type="EC" id="1.4.3.5"/>
    </reaction>
</comment>
<comment type="cofactor">
    <cofactor evidence="1">
        <name>FMN</name>
        <dbReference type="ChEBI" id="CHEBI:58210"/>
    </cofactor>
    <text evidence="1">Binds 1 FMN per subunit.</text>
</comment>
<comment type="pathway">
    <text evidence="1">Cofactor metabolism; pyridoxal 5'-phosphate salvage; pyridoxal 5'-phosphate from pyridoxamine 5'-phosphate: step 1/1.</text>
</comment>
<comment type="pathway">
    <text evidence="1">Cofactor metabolism; pyridoxal 5'-phosphate salvage; pyridoxal 5'-phosphate from pyridoxine 5'-phosphate: step 1/1.</text>
</comment>
<comment type="subunit">
    <text evidence="1">Homodimer.</text>
</comment>
<comment type="similarity">
    <text evidence="1">Belongs to the pyridoxamine 5'-phosphate oxidase family.</text>
</comment>
<keyword id="KW-0285">Flavoprotein</keyword>
<keyword id="KW-0288">FMN</keyword>
<keyword id="KW-0560">Oxidoreductase</keyword>
<keyword id="KW-0664">Pyridoxine biosynthesis</keyword>
<dbReference type="EC" id="1.4.3.5" evidence="1"/>
<dbReference type="EMBL" id="AP006841">
    <property type="protein sequence ID" value="BAD48204.1"/>
    <property type="molecule type" value="Genomic_DNA"/>
</dbReference>
<dbReference type="RefSeq" id="WP_005786189.1">
    <property type="nucleotide sequence ID" value="NZ_UYXF01000002.1"/>
</dbReference>
<dbReference type="RefSeq" id="YP_098738.1">
    <property type="nucleotide sequence ID" value="NC_006347.1"/>
</dbReference>
<dbReference type="SMR" id="Q64WC2"/>
<dbReference type="STRING" id="295405.BF1453"/>
<dbReference type="GeneID" id="60368628"/>
<dbReference type="KEGG" id="bfr:BF1453"/>
<dbReference type="PATRIC" id="fig|295405.11.peg.1419"/>
<dbReference type="HOGENOM" id="CLU_032263_2_2_10"/>
<dbReference type="OrthoDB" id="9780392at2"/>
<dbReference type="UniPathway" id="UPA01068">
    <property type="reaction ID" value="UER00304"/>
</dbReference>
<dbReference type="UniPathway" id="UPA01068">
    <property type="reaction ID" value="UER00305"/>
</dbReference>
<dbReference type="Proteomes" id="UP000002197">
    <property type="component" value="Chromosome"/>
</dbReference>
<dbReference type="GO" id="GO:0010181">
    <property type="term" value="F:FMN binding"/>
    <property type="evidence" value="ECO:0007669"/>
    <property type="project" value="UniProtKB-UniRule"/>
</dbReference>
<dbReference type="GO" id="GO:0004733">
    <property type="term" value="F:pyridoxamine phosphate oxidase activity"/>
    <property type="evidence" value="ECO:0007669"/>
    <property type="project" value="UniProtKB-UniRule"/>
</dbReference>
<dbReference type="GO" id="GO:0008615">
    <property type="term" value="P:pyridoxine biosynthetic process"/>
    <property type="evidence" value="ECO:0007669"/>
    <property type="project" value="UniProtKB-KW"/>
</dbReference>
<dbReference type="Gene3D" id="2.30.110.10">
    <property type="entry name" value="Electron Transport, Fmn-binding Protein, Chain A"/>
    <property type="match status" value="1"/>
</dbReference>
<dbReference type="HAMAP" id="MF_01629">
    <property type="entry name" value="PdxH"/>
    <property type="match status" value="1"/>
</dbReference>
<dbReference type="InterPro" id="IPR000659">
    <property type="entry name" value="Pyridox_Oxase"/>
</dbReference>
<dbReference type="InterPro" id="IPR019740">
    <property type="entry name" value="Pyridox_Oxase_CS"/>
</dbReference>
<dbReference type="InterPro" id="IPR011576">
    <property type="entry name" value="Pyridox_Oxase_N"/>
</dbReference>
<dbReference type="InterPro" id="IPR019576">
    <property type="entry name" value="Pyridoxamine_oxidase_dimer_C"/>
</dbReference>
<dbReference type="InterPro" id="IPR012349">
    <property type="entry name" value="Split_barrel_FMN-bd"/>
</dbReference>
<dbReference type="NCBIfam" id="TIGR00558">
    <property type="entry name" value="pdxH"/>
    <property type="match status" value="1"/>
</dbReference>
<dbReference type="NCBIfam" id="NF004231">
    <property type="entry name" value="PRK05679.1"/>
    <property type="match status" value="1"/>
</dbReference>
<dbReference type="PANTHER" id="PTHR10851:SF0">
    <property type="entry name" value="PYRIDOXINE-5'-PHOSPHATE OXIDASE"/>
    <property type="match status" value="1"/>
</dbReference>
<dbReference type="PANTHER" id="PTHR10851">
    <property type="entry name" value="PYRIDOXINE-5-PHOSPHATE OXIDASE"/>
    <property type="match status" value="1"/>
</dbReference>
<dbReference type="Pfam" id="PF10590">
    <property type="entry name" value="PNP_phzG_C"/>
    <property type="match status" value="1"/>
</dbReference>
<dbReference type="Pfam" id="PF01243">
    <property type="entry name" value="PNPOx_N"/>
    <property type="match status" value="1"/>
</dbReference>
<dbReference type="PIRSF" id="PIRSF000190">
    <property type="entry name" value="Pyd_amn-ph_oxd"/>
    <property type="match status" value="1"/>
</dbReference>
<dbReference type="SUPFAM" id="SSF50475">
    <property type="entry name" value="FMN-binding split barrel"/>
    <property type="match status" value="1"/>
</dbReference>
<dbReference type="PROSITE" id="PS01064">
    <property type="entry name" value="PYRIDOX_OXIDASE"/>
    <property type="match status" value="1"/>
</dbReference>
<feature type="chain" id="PRO_0000167681" description="Pyridoxine/pyridoxamine 5'-phosphate oxidase">
    <location>
        <begin position="1"/>
        <end position="235"/>
    </location>
</feature>
<feature type="binding site" evidence="1">
    <location>
        <begin position="30"/>
        <end position="33"/>
    </location>
    <ligand>
        <name>substrate</name>
    </ligand>
</feature>
<feature type="binding site" evidence="1">
    <location>
        <begin position="83"/>
        <end position="88"/>
    </location>
    <ligand>
        <name>FMN</name>
        <dbReference type="ChEBI" id="CHEBI:58210"/>
    </ligand>
</feature>
<feature type="binding site" evidence="1">
    <location>
        <position position="88"/>
    </location>
    <ligand>
        <name>substrate</name>
    </ligand>
</feature>
<feature type="binding site" evidence="1">
    <location>
        <begin position="98"/>
        <end position="99"/>
    </location>
    <ligand>
        <name>FMN</name>
        <dbReference type="ChEBI" id="CHEBI:58210"/>
    </ligand>
</feature>
<feature type="binding site" evidence="1">
    <location>
        <position position="104"/>
    </location>
    <ligand>
        <name>FMN</name>
        <dbReference type="ChEBI" id="CHEBI:58210"/>
    </ligand>
</feature>
<feature type="binding site" evidence="1">
    <location>
        <position position="105"/>
    </location>
    <ligand>
        <name>FMN</name>
        <dbReference type="ChEBI" id="CHEBI:58210"/>
    </ligand>
</feature>
<feature type="binding site" evidence="1">
    <location>
        <position position="127"/>
    </location>
    <ligand>
        <name>FMN</name>
        <dbReference type="ChEBI" id="CHEBI:58210"/>
    </ligand>
</feature>
<feature type="binding site" evidence="1">
    <location>
        <position position="145"/>
    </location>
    <ligand>
        <name>substrate</name>
    </ligand>
</feature>
<feature type="binding site" evidence="1">
    <location>
        <position position="149"/>
    </location>
    <ligand>
        <name>substrate</name>
    </ligand>
</feature>
<feature type="binding site" evidence="1">
    <location>
        <position position="153"/>
    </location>
    <ligand>
        <name>substrate</name>
    </ligand>
</feature>
<feature type="binding site" evidence="1">
    <location>
        <begin position="162"/>
        <end position="163"/>
    </location>
    <ligand>
        <name>FMN</name>
        <dbReference type="ChEBI" id="CHEBI:58210"/>
    </ligand>
</feature>
<feature type="binding site" evidence="1">
    <location>
        <position position="207"/>
    </location>
    <ligand>
        <name>FMN</name>
        <dbReference type="ChEBI" id="CHEBI:58210"/>
    </ligand>
</feature>
<feature type="binding site" evidence="1">
    <location>
        <begin position="213"/>
        <end position="215"/>
    </location>
    <ligand>
        <name>substrate</name>
    </ligand>
</feature>
<feature type="binding site" evidence="1">
    <location>
        <position position="217"/>
    </location>
    <ligand>
        <name>FMN</name>
        <dbReference type="ChEBI" id="CHEBI:58210"/>
    </ligand>
</feature>
<proteinExistence type="inferred from homology"/>
<protein>
    <recommendedName>
        <fullName evidence="1">Pyridoxine/pyridoxamine 5'-phosphate oxidase</fullName>
        <ecNumber evidence="1">1.4.3.5</ecNumber>
    </recommendedName>
    <alternativeName>
        <fullName evidence="1">PNP/PMP oxidase</fullName>
        <shortName evidence="1">PNPOx</shortName>
    </alternativeName>
    <alternativeName>
        <fullName evidence="1">Pyridoxal 5'-phosphate synthase</fullName>
    </alternativeName>
</protein>
<evidence type="ECO:0000255" key="1">
    <source>
        <dbReference type="HAMAP-Rule" id="MF_01629"/>
    </source>
</evidence>
<name>PDXH_BACFR</name>
<accession>Q64WC2</accession>
<organism>
    <name type="scientific">Bacteroides fragilis (strain YCH46)</name>
    <dbReference type="NCBI Taxonomy" id="295405"/>
    <lineage>
        <taxon>Bacteria</taxon>
        <taxon>Pseudomonadati</taxon>
        <taxon>Bacteroidota</taxon>
        <taxon>Bacteroidia</taxon>
        <taxon>Bacteroidales</taxon>
        <taxon>Bacteroidaceae</taxon>
        <taxon>Bacteroides</taxon>
    </lineage>
</organism>
<sequence>MSTDHVSTHPDSPLHGNGIGSEAINLAAIRQEYTKGGLKEGDLPDNPLSLFNRWLHEAIDAQVDEPTAMLVGTVSPEGQPSTRTVLLKDLHDGKFIFYTNYESRKGTHLAKNPYISLSFVWHALERQVHIEGIASKVPAGESDTYFRQRPYKSRIGARISPQSRPLKSRMQLIRNFVAEAARWVGREVERPAHWGGYAVTPHRIEFWQGRANRLHDRFLYSLQPDGSWQKERLAP</sequence>
<reference key="1">
    <citation type="journal article" date="2004" name="Proc. Natl. Acad. Sci. U.S.A.">
        <title>Genomic analysis of Bacteroides fragilis reveals extensive DNA inversions regulating cell surface adaptation.</title>
        <authorList>
            <person name="Kuwahara T."/>
            <person name="Yamashita A."/>
            <person name="Hirakawa H."/>
            <person name="Nakayama H."/>
            <person name="Toh H."/>
            <person name="Okada N."/>
            <person name="Kuhara S."/>
            <person name="Hattori M."/>
            <person name="Hayashi T."/>
            <person name="Ohnishi Y."/>
        </authorList>
    </citation>
    <scope>NUCLEOTIDE SEQUENCE [LARGE SCALE GENOMIC DNA]</scope>
    <source>
        <strain>YCH46</strain>
    </source>
</reference>